<dbReference type="EMBL" id="CP001283">
    <property type="protein sequence ID" value="ACK89259.1"/>
    <property type="molecule type" value="Genomic_DNA"/>
</dbReference>
<dbReference type="SMR" id="B7JJD5"/>
<dbReference type="KEGG" id="bcu:BCAH820_0024"/>
<dbReference type="HOGENOM" id="CLU_140930_1_0_9"/>
<dbReference type="Proteomes" id="UP000001363">
    <property type="component" value="Chromosome"/>
</dbReference>
<dbReference type="GO" id="GO:0043590">
    <property type="term" value="C:bacterial nucleoid"/>
    <property type="evidence" value="ECO:0007669"/>
    <property type="project" value="UniProtKB-UniRule"/>
</dbReference>
<dbReference type="GO" id="GO:0005829">
    <property type="term" value="C:cytosol"/>
    <property type="evidence" value="ECO:0007669"/>
    <property type="project" value="TreeGrafter"/>
</dbReference>
<dbReference type="GO" id="GO:0003677">
    <property type="term" value="F:DNA binding"/>
    <property type="evidence" value="ECO:0007669"/>
    <property type="project" value="UniProtKB-UniRule"/>
</dbReference>
<dbReference type="FunFam" id="3.30.1310.10:FF:000002">
    <property type="entry name" value="Nucleoid-associated protein IKC_06587"/>
    <property type="match status" value="1"/>
</dbReference>
<dbReference type="Gene3D" id="3.30.1310.10">
    <property type="entry name" value="Nucleoid-associated protein YbaB-like domain"/>
    <property type="match status" value="1"/>
</dbReference>
<dbReference type="HAMAP" id="MF_00274">
    <property type="entry name" value="DNA_YbaB_EbfC"/>
    <property type="match status" value="1"/>
</dbReference>
<dbReference type="InterPro" id="IPR036894">
    <property type="entry name" value="YbaB-like_sf"/>
</dbReference>
<dbReference type="InterPro" id="IPR004401">
    <property type="entry name" value="YbaB/EbfC"/>
</dbReference>
<dbReference type="NCBIfam" id="TIGR00103">
    <property type="entry name" value="DNA_YbaB_EbfC"/>
    <property type="match status" value="1"/>
</dbReference>
<dbReference type="PANTHER" id="PTHR33449">
    <property type="entry name" value="NUCLEOID-ASSOCIATED PROTEIN YBAB"/>
    <property type="match status" value="1"/>
</dbReference>
<dbReference type="PANTHER" id="PTHR33449:SF1">
    <property type="entry name" value="NUCLEOID-ASSOCIATED PROTEIN YBAB"/>
    <property type="match status" value="1"/>
</dbReference>
<dbReference type="Pfam" id="PF02575">
    <property type="entry name" value="YbaB_DNA_bd"/>
    <property type="match status" value="1"/>
</dbReference>
<dbReference type="PIRSF" id="PIRSF004555">
    <property type="entry name" value="UCP004555"/>
    <property type="match status" value="1"/>
</dbReference>
<dbReference type="SUPFAM" id="SSF82607">
    <property type="entry name" value="YbaB-like"/>
    <property type="match status" value="1"/>
</dbReference>
<evidence type="ECO:0000255" key="1">
    <source>
        <dbReference type="HAMAP-Rule" id="MF_00274"/>
    </source>
</evidence>
<reference key="1">
    <citation type="submission" date="2008-10" db="EMBL/GenBank/DDBJ databases">
        <title>Genome sequence of Bacillus cereus AH820.</title>
        <authorList>
            <person name="Dodson R.J."/>
            <person name="Durkin A.S."/>
            <person name="Rosovitz M.J."/>
            <person name="Rasko D.A."/>
            <person name="Hoffmaster A."/>
            <person name="Ravel J."/>
            <person name="Sutton G."/>
        </authorList>
    </citation>
    <scope>NUCLEOTIDE SEQUENCE [LARGE SCALE GENOMIC DNA]</scope>
    <source>
        <strain>AH820</strain>
    </source>
</reference>
<accession>B7JJD5</accession>
<comment type="function">
    <text evidence="1">Binds to DNA and alters its conformation. May be involved in regulation of gene expression, nucleoid organization and DNA protection.</text>
</comment>
<comment type="subunit">
    <text evidence="1">Homodimer.</text>
</comment>
<comment type="subcellular location">
    <subcellularLocation>
        <location evidence="1">Cytoplasm</location>
        <location evidence="1">Nucleoid</location>
    </subcellularLocation>
</comment>
<comment type="similarity">
    <text evidence="1">Belongs to the YbaB/EbfC family.</text>
</comment>
<sequence length="109" mass="11863">MMRGGMGNMNNMMKQMQKMQKEMAKAQEELGEKTVEGTAGGGMITVIANGHKQILEVKVKEEVVDPEDIEMLQDLVLAATNDALKKADELSNSTMGKFTKGLNLPGGMF</sequence>
<proteinExistence type="inferred from homology"/>
<gene>
    <name type="ordered locus">BCAH820_0024</name>
</gene>
<organism>
    <name type="scientific">Bacillus cereus (strain AH820)</name>
    <dbReference type="NCBI Taxonomy" id="405535"/>
    <lineage>
        <taxon>Bacteria</taxon>
        <taxon>Bacillati</taxon>
        <taxon>Bacillota</taxon>
        <taxon>Bacilli</taxon>
        <taxon>Bacillales</taxon>
        <taxon>Bacillaceae</taxon>
        <taxon>Bacillus</taxon>
        <taxon>Bacillus cereus group</taxon>
    </lineage>
</organism>
<protein>
    <recommendedName>
        <fullName evidence="1">Nucleoid-associated protein BCAH820_0024</fullName>
    </recommendedName>
</protein>
<name>Y024_BACC0</name>
<feature type="chain" id="PRO_1000119309" description="Nucleoid-associated protein BCAH820_0024">
    <location>
        <begin position="1"/>
        <end position="109"/>
    </location>
</feature>
<keyword id="KW-0963">Cytoplasm</keyword>
<keyword id="KW-0238">DNA-binding</keyword>